<evidence type="ECO:0000250" key="1">
    <source>
        <dbReference type="UniProtKB" id="P01946"/>
    </source>
</evidence>
<evidence type="ECO:0000255" key="2">
    <source>
        <dbReference type="PROSITE-ProRule" id="PRU00238"/>
    </source>
</evidence>
<keyword id="KW-0349">Heme</keyword>
<keyword id="KW-0408">Iron</keyword>
<keyword id="KW-0479">Metal-binding</keyword>
<keyword id="KW-0561">Oxygen transport</keyword>
<keyword id="KW-0813">Transport</keyword>
<dbReference type="EMBL" id="AF129135">
    <property type="protein sequence ID" value="AAB93462.1"/>
    <property type="molecule type" value="Genomic_DNA"/>
</dbReference>
<dbReference type="EMBL" id="AF129134">
    <property type="protein sequence ID" value="AAB93462.1"/>
    <property type="status" value="JOINED"/>
    <property type="molecule type" value="Genomic_DNA"/>
</dbReference>
<dbReference type="PIR" id="A92052">
    <property type="entry name" value="HAHOZC"/>
</dbReference>
<dbReference type="SMR" id="Q9TVA3"/>
<dbReference type="GO" id="GO:0072562">
    <property type="term" value="C:blood microparticle"/>
    <property type="evidence" value="ECO:0007669"/>
    <property type="project" value="TreeGrafter"/>
</dbReference>
<dbReference type="GO" id="GO:0031838">
    <property type="term" value="C:haptoglobin-hemoglobin complex"/>
    <property type="evidence" value="ECO:0007669"/>
    <property type="project" value="TreeGrafter"/>
</dbReference>
<dbReference type="GO" id="GO:0005833">
    <property type="term" value="C:hemoglobin complex"/>
    <property type="evidence" value="ECO:0007669"/>
    <property type="project" value="InterPro"/>
</dbReference>
<dbReference type="GO" id="GO:0031720">
    <property type="term" value="F:haptoglobin binding"/>
    <property type="evidence" value="ECO:0007669"/>
    <property type="project" value="TreeGrafter"/>
</dbReference>
<dbReference type="GO" id="GO:0020037">
    <property type="term" value="F:heme binding"/>
    <property type="evidence" value="ECO:0007669"/>
    <property type="project" value="InterPro"/>
</dbReference>
<dbReference type="GO" id="GO:0005506">
    <property type="term" value="F:iron ion binding"/>
    <property type="evidence" value="ECO:0007669"/>
    <property type="project" value="InterPro"/>
</dbReference>
<dbReference type="GO" id="GO:0043177">
    <property type="term" value="F:organic acid binding"/>
    <property type="evidence" value="ECO:0007669"/>
    <property type="project" value="TreeGrafter"/>
</dbReference>
<dbReference type="GO" id="GO:0019825">
    <property type="term" value="F:oxygen binding"/>
    <property type="evidence" value="ECO:0007669"/>
    <property type="project" value="InterPro"/>
</dbReference>
<dbReference type="GO" id="GO:0005344">
    <property type="term" value="F:oxygen carrier activity"/>
    <property type="evidence" value="ECO:0007669"/>
    <property type="project" value="UniProtKB-KW"/>
</dbReference>
<dbReference type="GO" id="GO:0004601">
    <property type="term" value="F:peroxidase activity"/>
    <property type="evidence" value="ECO:0007669"/>
    <property type="project" value="TreeGrafter"/>
</dbReference>
<dbReference type="GO" id="GO:0042744">
    <property type="term" value="P:hydrogen peroxide catabolic process"/>
    <property type="evidence" value="ECO:0007669"/>
    <property type="project" value="TreeGrafter"/>
</dbReference>
<dbReference type="CDD" id="cd08927">
    <property type="entry name" value="Hb-alpha-like"/>
    <property type="match status" value="1"/>
</dbReference>
<dbReference type="FunFam" id="1.10.490.10:FF:000002">
    <property type="entry name" value="Hemoglobin subunit alpha"/>
    <property type="match status" value="1"/>
</dbReference>
<dbReference type="Gene3D" id="1.10.490.10">
    <property type="entry name" value="Globins"/>
    <property type="match status" value="1"/>
</dbReference>
<dbReference type="InterPro" id="IPR000971">
    <property type="entry name" value="Globin"/>
</dbReference>
<dbReference type="InterPro" id="IPR009050">
    <property type="entry name" value="Globin-like_sf"/>
</dbReference>
<dbReference type="InterPro" id="IPR012292">
    <property type="entry name" value="Globin/Proto"/>
</dbReference>
<dbReference type="InterPro" id="IPR002338">
    <property type="entry name" value="Hemoglobin_a-typ"/>
</dbReference>
<dbReference type="InterPro" id="IPR050056">
    <property type="entry name" value="Hemoglobin_oxygen_transport"/>
</dbReference>
<dbReference type="InterPro" id="IPR002339">
    <property type="entry name" value="Hemoglobin_pi"/>
</dbReference>
<dbReference type="PANTHER" id="PTHR11442">
    <property type="entry name" value="HEMOGLOBIN FAMILY MEMBER"/>
    <property type="match status" value="1"/>
</dbReference>
<dbReference type="PANTHER" id="PTHR11442:SF48">
    <property type="entry name" value="HEMOGLOBIN SUBUNIT ALPHA"/>
    <property type="match status" value="1"/>
</dbReference>
<dbReference type="Pfam" id="PF00042">
    <property type="entry name" value="Globin"/>
    <property type="match status" value="1"/>
</dbReference>
<dbReference type="PRINTS" id="PR00612">
    <property type="entry name" value="ALPHAHAEM"/>
</dbReference>
<dbReference type="PRINTS" id="PR00815">
    <property type="entry name" value="PIHAEM"/>
</dbReference>
<dbReference type="SUPFAM" id="SSF46458">
    <property type="entry name" value="Globin-like"/>
    <property type="match status" value="1"/>
</dbReference>
<dbReference type="PROSITE" id="PS01033">
    <property type="entry name" value="GLOBIN"/>
    <property type="match status" value="1"/>
</dbReference>
<gene>
    <name type="primary">HBA2</name>
</gene>
<organism>
    <name type="scientific">Equus quagga burchellii</name>
    <name type="common">Burchell's zebra</name>
    <name type="synonym">Equus burchelli</name>
    <dbReference type="NCBI Taxonomy" id="89252"/>
    <lineage>
        <taxon>Eukaryota</taxon>
        <taxon>Metazoa</taxon>
        <taxon>Chordata</taxon>
        <taxon>Craniata</taxon>
        <taxon>Vertebrata</taxon>
        <taxon>Euteleostomi</taxon>
        <taxon>Mammalia</taxon>
        <taxon>Eutheria</taxon>
        <taxon>Laurasiatheria</taxon>
        <taxon>Perissodactyla</taxon>
        <taxon>Equidae</taxon>
        <taxon>Equus</taxon>
        <taxon>Equus quagga</taxon>
    </lineage>
</organism>
<accession>Q9TVA3</accession>
<feature type="chain" id="PRO_0000052626" description="Hemoglobin subunit alpha-2">
    <location>
        <begin position="1"/>
        <end position="142"/>
    </location>
</feature>
<feature type="peptide" id="PRO_0000455871" description="Hemopressin" evidence="1">
    <location>
        <begin position="96"/>
        <end position="104"/>
    </location>
</feature>
<feature type="domain" description="Globin" evidence="2">
    <location>
        <begin position="2"/>
        <end position="142"/>
    </location>
</feature>
<feature type="binding site" evidence="2">
    <location>
        <position position="59"/>
    </location>
    <ligand>
        <name>O2</name>
        <dbReference type="ChEBI" id="CHEBI:15379"/>
    </ligand>
</feature>
<feature type="binding site" description="proximal binding residue" evidence="2">
    <location>
        <position position="88"/>
    </location>
    <ligand>
        <name>heme b</name>
        <dbReference type="ChEBI" id="CHEBI:60344"/>
    </ligand>
    <ligandPart>
        <name>Fe</name>
        <dbReference type="ChEBI" id="CHEBI:18248"/>
    </ligandPart>
</feature>
<name>HBA2_EQUQB</name>
<protein>
    <recommendedName>
        <fullName>Hemoglobin subunit alpha-2</fullName>
    </recommendedName>
    <alternativeName>
        <fullName>Alpha-2-globin</fullName>
    </alternativeName>
    <alternativeName>
        <fullName>Hemoglobin alpha-2 chain</fullName>
    </alternativeName>
    <component>
        <recommendedName>
            <fullName evidence="1">Hemopressin</fullName>
        </recommendedName>
    </component>
</protein>
<proteinExistence type="evidence at transcript level"/>
<sequence length="142" mass="15190">MVLSAADKTNVKAAWGKVGGNAGEFGAEALERMFLGFPTTKTYFPHFDLSHGSAQVKAHGKKVGDALTLAVGHLDDLPGALSNLSDLHAHKLRVDPVNFKLLSHCLLSTLAVHLPNDFTPAVHASLDKFLSTVSTVLTSKYR</sequence>
<reference key="1">
    <citation type="journal article" date="1998" name="J. Mol. Evol.">
        <title>Phylogenetic relationships within the genus Equus and the evolution of alpha and theta globin genes.</title>
        <authorList>
            <person name="Oakenfull E.A."/>
            <person name="Clegg J.B."/>
        </authorList>
    </citation>
    <scope>NUCLEOTIDE SEQUENCE [GENOMIC DNA]</scope>
</reference>
<comment type="function">
    <text>Involved in oxygen transport from the lung to the various peripheral tissues.</text>
</comment>
<comment type="function">
    <molecule>Hemopressin</molecule>
    <text evidence="1">Hemopressin acts as an antagonist peptide of the cannabinoid receptor CNR1. Hemopressin-binding efficiently blocks cannabinoid receptor CNR1 and subsequent signaling.</text>
</comment>
<comment type="subunit">
    <text>Heterotetramer of two alpha chains and two beta chains.</text>
</comment>
<comment type="tissue specificity">
    <text>Red blood cells.</text>
</comment>
<comment type="similarity">
    <text evidence="2">Belongs to the globin family.</text>
</comment>